<proteinExistence type="evidence at transcript level"/>
<evidence type="ECO:0000250" key="1">
    <source>
        <dbReference type="UniProtKB" id="A0A0D4WTV1"/>
    </source>
</evidence>
<evidence type="ECO:0000250" key="2">
    <source>
        <dbReference type="UniProtKB" id="A0A0D4WV12"/>
    </source>
</evidence>
<evidence type="ECO:0000250" key="3">
    <source>
        <dbReference type="UniProtKB" id="P0CE80"/>
    </source>
</evidence>
<evidence type="ECO:0000250" key="4">
    <source>
        <dbReference type="UniProtKB" id="Q4ZFU2"/>
    </source>
</evidence>
<evidence type="ECO:0000250" key="5">
    <source>
        <dbReference type="UniProtKB" id="Q8I914"/>
    </source>
</evidence>
<evidence type="ECO:0000303" key="6">
    <source>
    </source>
</evidence>
<evidence type="ECO:0000305" key="7"/>
<evidence type="ECO:0000305" key="8">
    <source>
    </source>
</evidence>
<feature type="chain" id="PRO_0000392762" description="Dermonecrotic toxin LhSicTox-alphaIA2bvi">
    <location>
        <begin position="1" status="less than"/>
        <end position="273"/>
    </location>
</feature>
<feature type="active site" evidence="5">
    <location>
        <position position="5"/>
    </location>
</feature>
<feature type="active site" description="Nucleophile" evidence="5">
    <location>
        <position position="41"/>
    </location>
</feature>
<feature type="binding site" evidence="5">
    <location>
        <position position="25"/>
    </location>
    <ligand>
        <name>Mg(2+)</name>
        <dbReference type="ChEBI" id="CHEBI:18420"/>
    </ligand>
</feature>
<feature type="binding site" evidence="5">
    <location>
        <position position="27"/>
    </location>
    <ligand>
        <name>Mg(2+)</name>
        <dbReference type="ChEBI" id="CHEBI:18420"/>
    </ligand>
</feature>
<feature type="binding site" evidence="5">
    <location>
        <position position="85"/>
    </location>
    <ligand>
        <name>Mg(2+)</name>
        <dbReference type="ChEBI" id="CHEBI:18420"/>
    </ligand>
</feature>
<feature type="disulfide bond" evidence="3">
    <location>
        <begin position="45"/>
        <end position="51"/>
    </location>
</feature>
<feature type="disulfide bond" evidence="3">
    <location>
        <begin position="47"/>
        <end position="190"/>
    </location>
</feature>
<feature type="non-terminal residue">
    <location>
        <position position="1"/>
    </location>
</feature>
<protein>
    <recommendedName>
        <fullName evidence="6">Dermonecrotic toxin LhSicTox-alphaIA2bvi</fullName>
        <ecNumber evidence="4">4.6.1.-</ecNumber>
    </recommendedName>
    <alternativeName>
        <fullName>Phospholipase D</fullName>
        <shortName>PLD</shortName>
    </alternativeName>
    <alternativeName>
        <fullName>Sphingomyelin phosphodiesterase D</fullName>
        <shortName>SMD</shortName>
        <shortName>SMase D</shortName>
        <shortName>Sphingomyelinase D</shortName>
    </alternativeName>
</protein>
<sequence>WIMGHMVNAIYQIDEFVNLGANSIETDVSFDDNANPEYTYHGIPCDCGRSCLKWENYNDFLKGLRSATTPGNSKYQSKLILVVFDLKTGSLYDNQASEAGKKLAKNLLKHYWNNGNNGGRAYIVLSIPDLNHYPLIKGFTDTLKQEGHPELLEKVGYDFSGNDAIGDVAKAYKKAGVSGHVWQSDGITNCLLRGLSRVKDAVANRDSGKGYINKVYYWTVDKRATTRDALDAGVDGVMTDYPDVIADVMNEAAYKNKVRLATYEDSPWVTFKK</sequence>
<name>A1IB6_LOXHI</name>
<dbReference type="EC" id="4.6.1.-" evidence="4"/>
<dbReference type="EMBL" id="FJ171359">
    <property type="protein sequence ID" value="ACN48855.1"/>
    <property type="molecule type" value="mRNA"/>
</dbReference>
<dbReference type="SMR" id="C0JAS4"/>
<dbReference type="GO" id="GO:0005576">
    <property type="term" value="C:extracellular region"/>
    <property type="evidence" value="ECO:0007669"/>
    <property type="project" value="UniProtKB-SubCell"/>
</dbReference>
<dbReference type="GO" id="GO:0016829">
    <property type="term" value="F:lyase activity"/>
    <property type="evidence" value="ECO:0007669"/>
    <property type="project" value="UniProtKB-KW"/>
</dbReference>
<dbReference type="GO" id="GO:0046872">
    <property type="term" value="F:metal ion binding"/>
    <property type="evidence" value="ECO:0007669"/>
    <property type="project" value="UniProtKB-KW"/>
</dbReference>
<dbReference type="GO" id="GO:0008081">
    <property type="term" value="F:phosphoric diester hydrolase activity"/>
    <property type="evidence" value="ECO:0007669"/>
    <property type="project" value="InterPro"/>
</dbReference>
<dbReference type="GO" id="GO:0090729">
    <property type="term" value="F:toxin activity"/>
    <property type="evidence" value="ECO:0007669"/>
    <property type="project" value="UniProtKB-KW"/>
</dbReference>
<dbReference type="GO" id="GO:0031640">
    <property type="term" value="P:killing of cells of another organism"/>
    <property type="evidence" value="ECO:0007669"/>
    <property type="project" value="UniProtKB-KW"/>
</dbReference>
<dbReference type="GO" id="GO:0016042">
    <property type="term" value="P:lipid catabolic process"/>
    <property type="evidence" value="ECO:0007669"/>
    <property type="project" value="UniProtKB-KW"/>
</dbReference>
<dbReference type="CDD" id="cd08576">
    <property type="entry name" value="GDPD_like_SMaseD_PLD"/>
    <property type="match status" value="1"/>
</dbReference>
<dbReference type="Gene3D" id="3.20.20.190">
    <property type="entry name" value="Phosphatidylinositol (PI) phosphodiesterase"/>
    <property type="match status" value="1"/>
</dbReference>
<dbReference type="InterPro" id="IPR017946">
    <property type="entry name" value="PLC-like_Pdiesterase_TIM-brl"/>
</dbReference>
<dbReference type="Pfam" id="PF13653">
    <property type="entry name" value="GDPD_2"/>
    <property type="match status" value="1"/>
</dbReference>
<dbReference type="SUPFAM" id="SSF51695">
    <property type="entry name" value="PLC-like phosphodiesterases"/>
    <property type="match status" value="1"/>
</dbReference>
<keyword id="KW-0204">Cytolysis</keyword>
<keyword id="KW-1061">Dermonecrotic toxin</keyword>
<keyword id="KW-1015">Disulfide bond</keyword>
<keyword id="KW-0354">Hemolysis</keyword>
<keyword id="KW-0442">Lipid degradation</keyword>
<keyword id="KW-0443">Lipid metabolism</keyword>
<keyword id="KW-0456">Lyase</keyword>
<keyword id="KW-0460">Magnesium</keyword>
<keyword id="KW-0479">Metal-binding</keyword>
<keyword id="KW-0964">Secreted</keyword>
<keyword id="KW-0800">Toxin</keyword>
<comment type="function">
    <text evidence="1 3">Dermonecrotic toxins cleave the phosphodiester linkage between the phosphate and headgroup of certain phospholipids (sphingolipid and lysolipid substrates), forming an alcohol (often choline) and a cyclic phosphate (By similarity). This toxin acts on sphingomyelin (SM) (By similarity). It may also act on ceramide phosphoethanolamine (CPE), lysophosphatidylcholine (LPC) and lysophosphatidylethanolamine (LPE), but not on lysophosphatidylserine (LPS), and lysophosphatidylglycerol (LPG) (By similarity). It acts by transphosphatidylation, releasing exclusively cyclic phosphate products as second products (By similarity). Induces dermonecrosis, hemolysis, increased vascular permeability, edema, inflammatory response, and platelet aggregation (By similarity).</text>
</comment>
<comment type="catalytic activity">
    <reaction evidence="1">
        <text>an N-(acyl)-sphingosylphosphocholine = an N-(acyl)-sphingosyl-1,3-cyclic phosphate + choline</text>
        <dbReference type="Rhea" id="RHEA:60652"/>
        <dbReference type="ChEBI" id="CHEBI:15354"/>
        <dbReference type="ChEBI" id="CHEBI:64583"/>
        <dbReference type="ChEBI" id="CHEBI:143892"/>
    </reaction>
</comment>
<comment type="catalytic activity">
    <reaction evidence="1">
        <text>an N-(acyl)-sphingosylphosphoethanolamine = an N-(acyl)-sphingosyl-1,3-cyclic phosphate + ethanolamine</text>
        <dbReference type="Rhea" id="RHEA:60648"/>
        <dbReference type="ChEBI" id="CHEBI:57603"/>
        <dbReference type="ChEBI" id="CHEBI:143891"/>
        <dbReference type="ChEBI" id="CHEBI:143892"/>
    </reaction>
</comment>
<comment type="catalytic activity">
    <reaction evidence="1">
        <text>a 1-acyl-sn-glycero-3-phosphocholine = a 1-acyl-sn-glycero-2,3-cyclic phosphate + choline</text>
        <dbReference type="Rhea" id="RHEA:60700"/>
        <dbReference type="ChEBI" id="CHEBI:15354"/>
        <dbReference type="ChEBI" id="CHEBI:58168"/>
        <dbReference type="ChEBI" id="CHEBI:143947"/>
    </reaction>
</comment>
<comment type="catalytic activity">
    <reaction evidence="1">
        <text>a 1-acyl-sn-glycero-3-phosphoethanolamine = a 1-acyl-sn-glycero-2,3-cyclic phosphate + ethanolamine</text>
        <dbReference type="Rhea" id="RHEA:60704"/>
        <dbReference type="ChEBI" id="CHEBI:57603"/>
        <dbReference type="ChEBI" id="CHEBI:64381"/>
        <dbReference type="ChEBI" id="CHEBI:143947"/>
    </reaction>
</comment>
<comment type="cofactor">
    <cofactor evidence="5">
        <name>Mg(2+)</name>
        <dbReference type="ChEBI" id="CHEBI:18420"/>
    </cofactor>
    <text evidence="5">Binds 1 Mg(2+) ion per subunit.</text>
</comment>
<comment type="subcellular location">
    <subcellularLocation>
        <location evidence="8">Secreted</location>
    </subcellularLocation>
</comment>
<comment type="tissue specificity">
    <text evidence="8">Expressed by the venom gland.</text>
</comment>
<comment type="similarity">
    <text evidence="7">Belongs to the arthropod phospholipase D family. Class II subfamily.</text>
</comment>
<comment type="caution">
    <text evidence="1 2 4">The most common activity assay for dermonecrotic toxins detects enzymatic activity by monitoring choline release from substrate. Liberation of choline from sphingomyelin (SM) or lysophosphatidylcholine (LPC) is commonly assumed to result from substrate hydrolysis, giving either ceramide-1-phosphate (C1P) or lysophosphatidic acid (LPA), respectively, as a second product. However, two studies from Lajoie and colleagues (2013 and 2015) report the observation of exclusive formation of cyclic phosphate products as second products, resulting from intramolecular transphosphatidylation. Cyclic phosphates have vastly different biological properties from their monoester counterparts, and they may be relevant to the pathology of brown spider envenomation.</text>
</comment>
<organism>
    <name type="scientific">Loxosceles hirsuta</name>
    <name type="common">Recluse spider</name>
    <dbReference type="NCBI Taxonomy" id="571525"/>
    <lineage>
        <taxon>Eukaryota</taxon>
        <taxon>Metazoa</taxon>
        <taxon>Ecdysozoa</taxon>
        <taxon>Arthropoda</taxon>
        <taxon>Chelicerata</taxon>
        <taxon>Arachnida</taxon>
        <taxon>Araneae</taxon>
        <taxon>Araneomorphae</taxon>
        <taxon>Haplogynae</taxon>
        <taxon>Scytodoidea</taxon>
        <taxon>Sicariidae</taxon>
        <taxon>Loxosceles</taxon>
    </lineage>
</organism>
<reference key="1">
    <citation type="journal article" date="2009" name="Mol. Biol. Evol.">
        <title>Molecular evolution, functional variation, and proposed nomenclature of the gene family that includes sphingomyelinase D in sicariid spider venoms.</title>
        <authorList>
            <person name="Binford G.J."/>
            <person name="Bodner M.R."/>
            <person name="Cordes M.H."/>
            <person name="Baldwin K.L."/>
            <person name="Rynerson M.R."/>
            <person name="Burns S.N."/>
            <person name="Zobel-Thropp P.A."/>
        </authorList>
    </citation>
    <scope>NUCLEOTIDE SEQUENCE [MRNA]</scope>
    <scope>NOMENCLATURE</scope>
    <source>
        <tissue>Venom gland</tissue>
    </source>
</reference>
<accession>C0JAS4</accession>